<evidence type="ECO:0000255" key="1">
    <source>
        <dbReference type="HAMAP-Rule" id="MF_00076"/>
    </source>
</evidence>
<feature type="chain" id="PRO_1000092719" description="Imidazoleglycerol-phosphate dehydratase">
    <location>
        <begin position="1"/>
        <end position="191"/>
    </location>
</feature>
<comment type="catalytic activity">
    <reaction evidence="1">
        <text>D-erythro-1-(imidazol-4-yl)glycerol 3-phosphate = 3-(imidazol-4-yl)-2-oxopropyl phosphate + H2O</text>
        <dbReference type="Rhea" id="RHEA:11040"/>
        <dbReference type="ChEBI" id="CHEBI:15377"/>
        <dbReference type="ChEBI" id="CHEBI:57766"/>
        <dbReference type="ChEBI" id="CHEBI:58278"/>
        <dbReference type="EC" id="4.2.1.19"/>
    </reaction>
</comment>
<comment type="pathway">
    <text evidence="1">Amino-acid biosynthesis; L-histidine biosynthesis; L-histidine from 5-phospho-alpha-D-ribose 1-diphosphate: step 6/9.</text>
</comment>
<comment type="subcellular location">
    <subcellularLocation>
        <location evidence="1">Cytoplasm</location>
    </subcellularLocation>
</comment>
<comment type="similarity">
    <text evidence="1">Belongs to the imidazoleglycerol-phosphate dehydratase family.</text>
</comment>
<proteinExistence type="inferred from homology"/>
<gene>
    <name evidence="1" type="primary">hisB</name>
    <name type="ordered locus">THEYE_A0970</name>
</gene>
<protein>
    <recommendedName>
        <fullName evidence="1">Imidazoleglycerol-phosphate dehydratase</fullName>
        <shortName evidence="1">IGPD</shortName>
        <ecNumber evidence="1">4.2.1.19</ecNumber>
    </recommendedName>
</protein>
<dbReference type="EC" id="4.2.1.19" evidence="1"/>
<dbReference type="EMBL" id="CP001147">
    <property type="protein sequence ID" value="ACI21811.1"/>
    <property type="molecule type" value="Genomic_DNA"/>
</dbReference>
<dbReference type="RefSeq" id="WP_012546516.1">
    <property type="nucleotide sequence ID" value="NC_011296.1"/>
</dbReference>
<dbReference type="RefSeq" id="YP_002248803.1">
    <property type="nucleotide sequence ID" value="NC_011296.1"/>
</dbReference>
<dbReference type="SMR" id="B5YKN8"/>
<dbReference type="FunCoup" id="B5YKN8">
    <property type="interactions" value="327"/>
</dbReference>
<dbReference type="STRING" id="289376.THEYE_A0970"/>
<dbReference type="EnsemblBacteria" id="ACI21811">
    <property type="protein sequence ID" value="ACI21811"/>
    <property type="gene ID" value="THEYE_A0970"/>
</dbReference>
<dbReference type="KEGG" id="tye:THEYE_A0970"/>
<dbReference type="PATRIC" id="fig|289376.4.peg.954"/>
<dbReference type="eggNOG" id="COG0131">
    <property type="taxonomic scope" value="Bacteria"/>
</dbReference>
<dbReference type="HOGENOM" id="CLU_044308_3_0_0"/>
<dbReference type="InParanoid" id="B5YKN8"/>
<dbReference type="OrthoDB" id="9790411at2"/>
<dbReference type="UniPathway" id="UPA00031">
    <property type="reaction ID" value="UER00011"/>
</dbReference>
<dbReference type="Proteomes" id="UP000000718">
    <property type="component" value="Chromosome"/>
</dbReference>
<dbReference type="GO" id="GO:0005737">
    <property type="term" value="C:cytoplasm"/>
    <property type="evidence" value="ECO:0007669"/>
    <property type="project" value="UniProtKB-SubCell"/>
</dbReference>
<dbReference type="GO" id="GO:0004424">
    <property type="term" value="F:imidazoleglycerol-phosphate dehydratase activity"/>
    <property type="evidence" value="ECO:0000318"/>
    <property type="project" value="GO_Central"/>
</dbReference>
<dbReference type="GO" id="GO:0000105">
    <property type="term" value="P:L-histidine biosynthetic process"/>
    <property type="evidence" value="ECO:0000318"/>
    <property type="project" value="GO_Central"/>
</dbReference>
<dbReference type="CDD" id="cd07914">
    <property type="entry name" value="IGPD"/>
    <property type="match status" value="1"/>
</dbReference>
<dbReference type="FunFam" id="3.30.230.40:FF:000001">
    <property type="entry name" value="Imidazoleglycerol-phosphate dehydratase HisB"/>
    <property type="match status" value="1"/>
</dbReference>
<dbReference type="FunFam" id="3.30.230.40:FF:000003">
    <property type="entry name" value="Imidazoleglycerol-phosphate dehydratase HisB"/>
    <property type="match status" value="1"/>
</dbReference>
<dbReference type="Gene3D" id="3.30.230.40">
    <property type="entry name" value="Imidazole glycerol phosphate dehydratase, domain 1"/>
    <property type="match status" value="2"/>
</dbReference>
<dbReference type="HAMAP" id="MF_00076">
    <property type="entry name" value="HisB"/>
    <property type="match status" value="1"/>
</dbReference>
<dbReference type="InterPro" id="IPR038494">
    <property type="entry name" value="IGPD_sf"/>
</dbReference>
<dbReference type="InterPro" id="IPR000807">
    <property type="entry name" value="ImidazoleglycerolP_deHydtase"/>
</dbReference>
<dbReference type="InterPro" id="IPR020565">
    <property type="entry name" value="ImidazoleglycerP_deHydtase_CS"/>
</dbReference>
<dbReference type="InterPro" id="IPR020568">
    <property type="entry name" value="Ribosomal_Su5_D2-typ_SF"/>
</dbReference>
<dbReference type="NCBIfam" id="NF002111">
    <property type="entry name" value="PRK00951.2-1"/>
    <property type="match status" value="1"/>
</dbReference>
<dbReference type="NCBIfam" id="NF002114">
    <property type="entry name" value="PRK00951.2-4"/>
    <property type="match status" value="1"/>
</dbReference>
<dbReference type="PANTHER" id="PTHR23133:SF2">
    <property type="entry name" value="IMIDAZOLEGLYCEROL-PHOSPHATE DEHYDRATASE"/>
    <property type="match status" value="1"/>
</dbReference>
<dbReference type="PANTHER" id="PTHR23133">
    <property type="entry name" value="IMIDAZOLEGLYCEROL-PHOSPHATE DEHYDRATASE HIS7"/>
    <property type="match status" value="1"/>
</dbReference>
<dbReference type="Pfam" id="PF00475">
    <property type="entry name" value="IGPD"/>
    <property type="match status" value="1"/>
</dbReference>
<dbReference type="SUPFAM" id="SSF54211">
    <property type="entry name" value="Ribosomal protein S5 domain 2-like"/>
    <property type="match status" value="2"/>
</dbReference>
<dbReference type="PROSITE" id="PS00954">
    <property type="entry name" value="IGP_DEHYDRATASE_1"/>
    <property type="match status" value="1"/>
</dbReference>
<dbReference type="PROSITE" id="PS00955">
    <property type="entry name" value="IGP_DEHYDRATASE_2"/>
    <property type="match status" value="1"/>
</dbReference>
<reference key="1">
    <citation type="submission" date="2008-08" db="EMBL/GenBank/DDBJ databases">
        <title>The complete genome sequence of Thermodesulfovibrio yellowstonii strain ATCC 51303 / DSM 11347 / YP87.</title>
        <authorList>
            <person name="Dodson R.J."/>
            <person name="Durkin A.S."/>
            <person name="Wu M."/>
            <person name="Eisen J."/>
            <person name="Sutton G."/>
        </authorList>
    </citation>
    <scope>NUCLEOTIDE SEQUENCE [LARGE SCALE GENOMIC DNA]</scope>
    <source>
        <strain>ATCC 51303 / DSM 11347 / YP87</strain>
    </source>
</reference>
<name>HIS7_THEYD</name>
<sequence length="191" mass="21411">MRKASVSRKTKETDIKLEFNLDGTGNSDINTSVGFLDHMFELLAFHGNFDIKLKAKGDIHVDYHHLIEDLGIVLGKAIDKTLLDRNGIKRYGFASIPMDEALAQVSIDIGGREFLIYNVKFDGYIKDIDISLFEEFFRAVSNHGKIALHINVLYGKDLHHIIEAVFKAFAKALSDASRIYGQQLPSTKGVI</sequence>
<organism>
    <name type="scientific">Thermodesulfovibrio yellowstonii (strain ATCC 51303 / DSM 11347 / YP87)</name>
    <dbReference type="NCBI Taxonomy" id="289376"/>
    <lineage>
        <taxon>Bacteria</taxon>
        <taxon>Pseudomonadati</taxon>
        <taxon>Nitrospirota</taxon>
        <taxon>Thermodesulfovibrionia</taxon>
        <taxon>Thermodesulfovibrionales</taxon>
        <taxon>Thermodesulfovibrionaceae</taxon>
        <taxon>Thermodesulfovibrio</taxon>
    </lineage>
</organism>
<keyword id="KW-0028">Amino-acid biosynthesis</keyword>
<keyword id="KW-0963">Cytoplasm</keyword>
<keyword id="KW-0368">Histidine biosynthesis</keyword>
<keyword id="KW-0456">Lyase</keyword>
<keyword id="KW-1185">Reference proteome</keyword>
<accession>B5YKN8</accession>